<organism>
    <name type="scientific">Mycolicibacterium smegmatis (strain ATCC 700084 / mc(2)155)</name>
    <name type="common">Mycobacterium smegmatis</name>
    <dbReference type="NCBI Taxonomy" id="246196"/>
    <lineage>
        <taxon>Bacteria</taxon>
        <taxon>Bacillati</taxon>
        <taxon>Actinomycetota</taxon>
        <taxon>Actinomycetes</taxon>
        <taxon>Mycobacteriales</taxon>
        <taxon>Mycobacteriaceae</taxon>
        <taxon>Mycolicibacterium</taxon>
    </lineage>
</organism>
<feature type="chain" id="PRO_0000338862" description="Translation initiation factor IF-1">
    <location>
        <begin position="1"/>
        <end position="73"/>
    </location>
</feature>
<feature type="domain" description="S1-like" evidence="1">
    <location>
        <begin position="1"/>
        <end position="73"/>
    </location>
</feature>
<accession>A0QSL3</accession>
<accession>I7G467</accession>
<keyword id="KW-0963">Cytoplasm</keyword>
<keyword id="KW-0396">Initiation factor</keyword>
<keyword id="KW-0648">Protein biosynthesis</keyword>
<keyword id="KW-1185">Reference proteome</keyword>
<keyword id="KW-0694">RNA-binding</keyword>
<keyword id="KW-0699">rRNA-binding</keyword>
<sequence length="73" mass="8503">MAKKDGAIEVEGRVIEPLPNAMFRIELENGHKVLAHISGKMRQHYIRILPEDRVVVELSPYDLSRGRIVYRYK</sequence>
<proteinExistence type="evidence at protein level"/>
<comment type="function">
    <text evidence="1">One of the essential components for the initiation of protein synthesis. Stabilizes the binding of IF-2 and IF-3 on the 30S subunit to which N-formylmethionyl-tRNA(fMet) subsequently binds. Helps modulate mRNA selection, yielding the 30S pre-initiation complex (PIC). Upon addition of the 50S ribosomal subunit IF-1, IF-2 and IF-3 are released leaving the mature 70S translation initiation complex.</text>
</comment>
<comment type="subunit">
    <text evidence="1">Component of the 30S ribosomal translation pre-initiation complex which assembles on the 30S ribosome in the order IF-2 and IF-3, IF-1 and N-formylmethionyl-tRNA(fMet); mRNA recruitment can occur at any time during PIC assembly.</text>
</comment>
<comment type="subcellular location">
    <subcellularLocation>
        <location evidence="1">Cytoplasm</location>
    </subcellularLocation>
</comment>
<comment type="similarity">
    <text evidence="1">Belongs to the IF-1 family.</text>
</comment>
<evidence type="ECO:0000255" key="1">
    <source>
        <dbReference type="HAMAP-Rule" id="MF_00075"/>
    </source>
</evidence>
<protein>
    <recommendedName>
        <fullName evidence="1">Translation initiation factor IF-1</fullName>
    </recommendedName>
</protein>
<reference key="1">
    <citation type="submission" date="2006-10" db="EMBL/GenBank/DDBJ databases">
        <authorList>
            <person name="Fleischmann R.D."/>
            <person name="Dodson R.J."/>
            <person name="Haft D.H."/>
            <person name="Merkel J.S."/>
            <person name="Nelson W.C."/>
            <person name="Fraser C.M."/>
        </authorList>
    </citation>
    <scope>NUCLEOTIDE SEQUENCE [LARGE SCALE GENOMIC DNA]</scope>
    <source>
        <strain>ATCC 700084 / mc(2)155</strain>
    </source>
</reference>
<reference key="2">
    <citation type="journal article" date="2007" name="Genome Biol.">
        <title>Interrupted coding sequences in Mycobacterium smegmatis: authentic mutations or sequencing errors?</title>
        <authorList>
            <person name="Deshayes C."/>
            <person name="Perrodou E."/>
            <person name="Gallien S."/>
            <person name="Euphrasie D."/>
            <person name="Schaeffer C."/>
            <person name="Van-Dorsselaer A."/>
            <person name="Poch O."/>
            <person name="Lecompte O."/>
            <person name="Reyrat J.-M."/>
        </authorList>
    </citation>
    <scope>NUCLEOTIDE SEQUENCE [LARGE SCALE GENOMIC DNA]</scope>
    <source>
        <strain>ATCC 700084 / mc(2)155</strain>
    </source>
</reference>
<reference key="3">
    <citation type="journal article" date="2009" name="Genome Res.">
        <title>Ortho-proteogenomics: multiple proteomes investigation through orthology and a new MS-based protocol.</title>
        <authorList>
            <person name="Gallien S."/>
            <person name="Perrodou E."/>
            <person name="Carapito C."/>
            <person name="Deshayes C."/>
            <person name="Reyrat J.-M."/>
            <person name="Van Dorsselaer A."/>
            <person name="Poch O."/>
            <person name="Schaeffer C."/>
            <person name="Lecompte O."/>
        </authorList>
    </citation>
    <scope>NUCLEOTIDE SEQUENCE [LARGE SCALE GENOMIC DNA]</scope>
    <scope>IDENTIFICATION BY MASS SPECTROMETRY [LARGE SCALE ANALYSIS]</scope>
    <source>
        <strain>ATCC 700084 / mc(2)155</strain>
    </source>
</reference>
<dbReference type="EMBL" id="CP000480">
    <property type="protein sequence ID" value="ABK74732.1"/>
    <property type="molecule type" value="Genomic_DNA"/>
</dbReference>
<dbReference type="EMBL" id="CP001663">
    <property type="protein sequence ID" value="AFP37956.1"/>
    <property type="molecule type" value="Genomic_DNA"/>
</dbReference>
<dbReference type="RefSeq" id="WP_003886926.1">
    <property type="nucleotide sequence ID" value="NZ_SIJM01000016.1"/>
</dbReference>
<dbReference type="RefSeq" id="YP_885901.1">
    <property type="nucleotide sequence ID" value="NC_008596.1"/>
</dbReference>
<dbReference type="SMR" id="A0QSL3"/>
<dbReference type="STRING" id="246196.MSMEG_1519"/>
<dbReference type="PaxDb" id="246196-MSMEI_1483"/>
<dbReference type="GeneID" id="93456361"/>
<dbReference type="KEGG" id="msb:LJ00_07590"/>
<dbReference type="KEGG" id="msg:MSMEI_1483"/>
<dbReference type="KEGG" id="msm:MSMEG_1519"/>
<dbReference type="PATRIC" id="fig|246196.19.peg.1504"/>
<dbReference type="eggNOG" id="COG0361">
    <property type="taxonomic scope" value="Bacteria"/>
</dbReference>
<dbReference type="OrthoDB" id="9803250at2"/>
<dbReference type="PRO" id="PR:A0QSL3"/>
<dbReference type="Proteomes" id="UP000000757">
    <property type="component" value="Chromosome"/>
</dbReference>
<dbReference type="Proteomes" id="UP000006158">
    <property type="component" value="Chromosome"/>
</dbReference>
<dbReference type="GO" id="GO:0005829">
    <property type="term" value="C:cytosol"/>
    <property type="evidence" value="ECO:0007669"/>
    <property type="project" value="TreeGrafter"/>
</dbReference>
<dbReference type="GO" id="GO:0043022">
    <property type="term" value="F:ribosome binding"/>
    <property type="evidence" value="ECO:0007669"/>
    <property type="project" value="UniProtKB-UniRule"/>
</dbReference>
<dbReference type="GO" id="GO:0019843">
    <property type="term" value="F:rRNA binding"/>
    <property type="evidence" value="ECO:0007669"/>
    <property type="project" value="UniProtKB-UniRule"/>
</dbReference>
<dbReference type="GO" id="GO:0003743">
    <property type="term" value="F:translation initiation factor activity"/>
    <property type="evidence" value="ECO:0007669"/>
    <property type="project" value="UniProtKB-UniRule"/>
</dbReference>
<dbReference type="CDD" id="cd04451">
    <property type="entry name" value="S1_IF1"/>
    <property type="match status" value="1"/>
</dbReference>
<dbReference type="FunFam" id="2.40.50.140:FF:000002">
    <property type="entry name" value="Translation initiation factor IF-1"/>
    <property type="match status" value="1"/>
</dbReference>
<dbReference type="Gene3D" id="2.40.50.140">
    <property type="entry name" value="Nucleic acid-binding proteins"/>
    <property type="match status" value="1"/>
</dbReference>
<dbReference type="HAMAP" id="MF_00075">
    <property type="entry name" value="IF_1"/>
    <property type="match status" value="1"/>
</dbReference>
<dbReference type="InterPro" id="IPR012340">
    <property type="entry name" value="NA-bd_OB-fold"/>
</dbReference>
<dbReference type="InterPro" id="IPR006196">
    <property type="entry name" value="RNA-binding_domain_S1_IF1"/>
</dbReference>
<dbReference type="InterPro" id="IPR004368">
    <property type="entry name" value="TIF_IF1"/>
</dbReference>
<dbReference type="NCBIfam" id="TIGR00008">
    <property type="entry name" value="infA"/>
    <property type="match status" value="1"/>
</dbReference>
<dbReference type="PANTHER" id="PTHR33370">
    <property type="entry name" value="TRANSLATION INITIATION FACTOR IF-1, CHLOROPLASTIC"/>
    <property type="match status" value="1"/>
</dbReference>
<dbReference type="PANTHER" id="PTHR33370:SF1">
    <property type="entry name" value="TRANSLATION INITIATION FACTOR IF-1, CHLOROPLASTIC"/>
    <property type="match status" value="1"/>
</dbReference>
<dbReference type="Pfam" id="PF01176">
    <property type="entry name" value="eIF-1a"/>
    <property type="match status" value="1"/>
</dbReference>
<dbReference type="SUPFAM" id="SSF50249">
    <property type="entry name" value="Nucleic acid-binding proteins"/>
    <property type="match status" value="1"/>
</dbReference>
<dbReference type="PROSITE" id="PS50832">
    <property type="entry name" value="S1_IF1_TYPE"/>
    <property type="match status" value="1"/>
</dbReference>
<name>IF1_MYCS2</name>
<gene>
    <name evidence="1" type="primary">infA</name>
    <name type="ordered locus">MSMEG_1519</name>
    <name type="ordered locus">MSMEI_1483</name>
</gene>